<accession>Q76IH4</accession>
<accession>Q8HQQ7</accession>
<keyword id="KW-0150">Chloroplast</keyword>
<keyword id="KW-0507">mRNA processing</keyword>
<keyword id="KW-0934">Plastid</keyword>
<keyword id="KW-0694">RNA-binding</keyword>
<keyword id="KW-0819">tRNA processing</keyword>
<protein>
    <recommendedName>
        <fullName evidence="1">Maturase K</fullName>
    </recommendedName>
    <alternativeName>
        <fullName evidence="1">Intron maturase</fullName>
    </alternativeName>
</protein>
<reference key="1">
    <citation type="submission" date="2002-05" db="EMBL/GenBank/DDBJ databases">
        <title>Phylogeny of diploxylon Pinus.</title>
        <authorList>
            <person name="Geada-Lopez G."/>
            <person name="Kamiya K."/>
            <person name="Harada K."/>
        </authorList>
    </citation>
    <scope>NUCLEOTIDE SEQUENCE [GENOMIC DNA]</scope>
    <source>
        <tissue>Leaf</tissue>
    </source>
</reference>
<reference key="2">
    <citation type="submission" date="2002-12" db="EMBL/GenBank/DDBJ databases">
        <title>Evolutionary relationships in pines.</title>
        <authorList>
            <person name="Geada-Lopez G."/>
            <person name="Harada K."/>
        </authorList>
    </citation>
    <scope>NUCLEOTIDE SEQUENCE [GENOMIC DNA]</scope>
</reference>
<name>MATK_PINSY</name>
<comment type="function">
    <text evidence="1">Usually encoded in the trnK tRNA gene intron. Probably assists in splicing its own and other chloroplast group II introns.</text>
</comment>
<comment type="subcellular location">
    <subcellularLocation>
        <location>Plastid</location>
        <location>Chloroplast</location>
    </subcellularLocation>
</comment>
<comment type="similarity">
    <text evidence="1">Belongs to the intron maturase 2 family. MatK subfamily.</text>
</comment>
<feature type="chain" id="PRO_0000143632" description="Maturase K">
    <location>
        <begin position="1"/>
        <end position="515"/>
    </location>
</feature>
<feature type="sequence conflict" description="In Ref. 1; BAC22909." evidence="2" ref="1">
    <original>S</original>
    <variation>T</variation>
    <location>
        <position position="235"/>
    </location>
</feature>
<gene>
    <name evidence="1" type="primary">matK</name>
</gene>
<organism>
    <name type="scientific">Pinus sylvestris</name>
    <name type="common">Scotch pine</name>
    <dbReference type="NCBI Taxonomy" id="3349"/>
    <lineage>
        <taxon>Eukaryota</taxon>
        <taxon>Viridiplantae</taxon>
        <taxon>Streptophyta</taxon>
        <taxon>Embryophyta</taxon>
        <taxon>Tracheophyta</taxon>
        <taxon>Spermatophyta</taxon>
        <taxon>Pinopsida</taxon>
        <taxon>Pinidae</taxon>
        <taxon>Conifers I</taxon>
        <taxon>Pinales</taxon>
        <taxon>Pinaceae</taxon>
        <taxon>Pinus</taxon>
        <taxon>Pinus subgen. Pinus</taxon>
    </lineage>
</organism>
<evidence type="ECO:0000255" key="1">
    <source>
        <dbReference type="HAMAP-Rule" id="MF_01390"/>
    </source>
</evidence>
<evidence type="ECO:0000305" key="2"/>
<proteinExistence type="inferred from homology"/>
<sequence length="515" mass="60794">MDEFHRCGKEDSFWQQCFLYPLFFQEDLYAISHDHYLDVSSSSRPMEHLSSNDQLSFLTVKRLIGQIRQQNHSIVLFVNCDPNPLADRKKSFYSESVLEALTLVLEVPFSIWSKSSVEGMNECKSFRSIHSIFPFLEDKFPHSNSILDARIPYSIHPEILVRTFRRWIRDAPSLHPLRSVLYDYRNSPENLQRSIIVVPRVNTRFFLFLLNYYVCECESILFSRLKRSSHSRSLSHGSFPQRTHFHRKIKHIIIFSRRNSLKSIWSLKDPKIHYVRYGERPIIAIKGADLLVKKCRYYLLIFRQFYFHLWSEPYRVCSHQLSKNCSSSPGYFLRVRMNPLLVRTKTLDELFIPVLITNEMDPIVPIVPIIGLLATEKFCDISGRPISKLSWTSLTDDDILDRFDQIWRNLFHYYSGSFDRDGLYRIKYILLLSCAKTLACKHKSTIRVVRKELGPELFKKSFSKEREFDSLPFSSKAAARSQRERIWHSDIPQINPLANSWQKIQDLKIENLFDQ</sequence>
<dbReference type="EMBL" id="AB084492">
    <property type="protein sequence ID" value="BAC22909.1"/>
    <property type="molecule type" value="Genomic_DNA"/>
</dbReference>
<dbReference type="EMBL" id="AB097781">
    <property type="protein sequence ID" value="BAC77424.1"/>
    <property type="molecule type" value="Genomic_DNA"/>
</dbReference>
<dbReference type="RefSeq" id="YP_009388231.1">
    <property type="nucleotide sequence ID" value="NC_035069.1"/>
</dbReference>
<dbReference type="GeneID" id="33081630"/>
<dbReference type="GO" id="GO:0009507">
    <property type="term" value="C:chloroplast"/>
    <property type="evidence" value="ECO:0007669"/>
    <property type="project" value="UniProtKB-SubCell"/>
</dbReference>
<dbReference type="GO" id="GO:0003723">
    <property type="term" value="F:RNA binding"/>
    <property type="evidence" value="ECO:0007669"/>
    <property type="project" value="UniProtKB-KW"/>
</dbReference>
<dbReference type="GO" id="GO:0006397">
    <property type="term" value="P:mRNA processing"/>
    <property type="evidence" value="ECO:0007669"/>
    <property type="project" value="UniProtKB-KW"/>
</dbReference>
<dbReference type="GO" id="GO:0008380">
    <property type="term" value="P:RNA splicing"/>
    <property type="evidence" value="ECO:0007669"/>
    <property type="project" value="UniProtKB-UniRule"/>
</dbReference>
<dbReference type="GO" id="GO:0008033">
    <property type="term" value="P:tRNA processing"/>
    <property type="evidence" value="ECO:0007669"/>
    <property type="project" value="UniProtKB-KW"/>
</dbReference>
<dbReference type="HAMAP" id="MF_01390">
    <property type="entry name" value="MatK"/>
    <property type="match status" value="1"/>
</dbReference>
<dbReference type="InterPro" id="IPR024937">
    <property type="entry name" value="Domain_X"/>
</dbReference>
<dbReference type="InterPro" id="IPR002866">
    <property type="entry name" value="Maturase_MatK"/>
</dbReference>
<dbReference type="InterPro" id="IPR024942">
    <property type="entry name" value="Maturase_MatK_N"/>
</dbReference>
<dbReference type="PANTHER" id="PTHR34811">
    <property type="entry name" value="MATURASE K"/>
    <property type="match status" value="1"/>
</dbReference>
<dbReference type="PANTHER" id="PTHR34811:SF1">
    <property type="entry name" value="MATURASE K"/>
    <property type="match status" value="1"/>
</dbReference>
<dbReference type="Pfam" id="PF01348">
    <property type="entry name" value="Intron_maturas2"/>
    <property type="match status" value="1"/>
</dbReference>
<dbReference type="Pfam" id="PF01824">
    <property type="entry name" value="MatK_N"/>
    <property type="match status" value="1"/>
</dbReference>
<geneLocation type="chloroplast"/>